<reference key="1">
    <citation type="journal article" date="2009" name="J. Bacteriol.">
        <title>The genome of Burkholderia cenocepacia J2315, an epidemic pathogen of cystic fibrosis patients.</title>
        <authorList>
            <person name="Holden M.T."/>
            <person name="Seth-Smith H.M."/>
            <person name="Crossman L.C."/>
            <person name="Sebaihia M."/>
            <person name="Bentley S.D."/>
            <person name="Cerdeno-Tarraga A.M."/>
            <person name="Thomson N.R."/>
            <person name="Bason N."/>
            <person name="Quail M.A."/>
            <person name="Sharp S."/>
            <person name="Cherevach I."/>
            <person name="Churcher C."/>
            <person name="Goodhead I."/>
            <person name="Hauser H."/>
            <person name="Holroyd N."/>
            <person name="Mungall K."/>
            <person name="Scott P."/>
            <person name="Walker D."/>
            <person name="White B."/>
            <person name="Rose H."/>
            <person name="Iversen P."/>
            <person name="Mil-Homens D."/>
            <person name="Rocha E.P."/>
            <person name="Fialho A.M."/>
            <person name="Baldwin A."/>
            <person name="Dowson C."/>
            <person name="Barrell B.G."/>
            <person name="Govan J.R."/>
            <person name="Vandamme P."/>
            <person name="Hart C.A."/>
            <person name="Mahenthiralingam E."/>
            <person name="Parkhill J."/>
        </authorList>
    </citation>
    <scope>NUCLEOTIDE SEQUENCE [LARGE SCALE GENOMIC DNA]</scope>
    <source>
        <strain>ATCC BAA-245 / DSM 16553 / LMG 16656 / NCTC 13227 / J2315 / CF5610</strain>
    </source>
</reference>
<comment type="function">
    <text evidence="1">Catalyzes the synthesis of the hydroxymethylpyrimidine phosphate (HMP-P) moiety of thiamine from aminoimidazole ribotide (AIR) in a radical S-adenosyl-L-methionine (SAM)-dependent reaction.</text>
</comment>
<comment type="catalytic activity">
    <reaction evidence="1">
        <text>5-amino-1-(5-phospho-beta-D-ribosyl)imidazole + S-adenosyl-L-methionine = 4-amino-2-methyl-5-(phosphooxymethyl)pyrimidine + CO + 5'-deoxyadenosine + formate + L-methionine + 3 H(+)</text>
        <dbReference type="Rhea" id="RHEA:24840"/>
        <dbReference type="ChEBI" id="CHEBI:15378"/>
        <dbReference type="ChEBI" id="CHEBI:15740"/>
        <dbReference type="ChEBI" id="CHEBI:17245"/>
        <dbReference type="ChEBI" id="CHEBI:17319"/>
        <dbReference type="ChEBI" id="CHEBI:57844"/>
        <dbReference type="ChEBI" id="CHEBI:58354"/>
        <dbReference type="ChEBI" id="CHEBI:59789"/>
        <dbReference type="ChEBI" id="CHEBI:137981"/>
        <dbReference type="EC" id="4.1.99.17"/>
    </reaction>
</comment>
<comment type="cofactor">
    <cofactor evidence="1">
        <name>[4Fe-4S] cluster</name>
        <dbReference type="ChEBI" id="CHEBI:49883"/>
    </cofactor>
    <text evidence="1">Binds 1 [4Fe-4S] cluster per subunit. The cluster is coordinated with 3 cysteines and an exchangeable S-adenosyl-L-methionine.</text>
</comment>
<comment type="pathway">
    <text evidence="1">Cofactor biosynthesis; thiamine diphosphate biosynthesis.</text>
</comment>
<comment type="subunit">
    <text evidence="1">Homodimer.</text>
</comment>
<comment type="similarity">
    <text evidence="1">Belongs to the ThiC family.</text>
</comment>
<sequence>MNANPKFLSADAHVDAAAVAPLPNSRKVYVTGSQPDIRVPMREITQADTPTGFGGEKNPPIYVYDTSGPYTDPDAKIDIRAGLPALRQRWIEARGDTEVLPGLSSQYGLERAADPATAELRFPGLHRNPRRAQAGKNVTQMHYARQGIITPEMEYIAIRENQRRAEYIESLKSSGPNGAKLAAMMGRQHPGQAFGAAAFGANALAEITPEFVRDEVARGRAIIPANINHPESEPMIIGRNFLVKINANIGNSAVTSSIGEEVDKMTWAIRWGGDTVMDLSTGKHIHETREWIIRNSPVPIGTVPIYQALEKVNGKAEDLTWEIFRDTLIEQAEQGVDYFTIHAGVRLQYVPLTANRMTGIVSRGGSIMAKWCLAHHKESFLYEHFEEICEIMKAYDVSFSLGDGLRPGSIYDANDEAQLGELKTLGELTQIAWKHDVQVMIEGPGHVPMQLIKENMDLQLDWCKEAPFYTLGPLTTDIAPGYDHITSGIGAAMIGWFGTAMLCYVTPKEHLGLPNKDDVKEGIITYKLAAHAADLAKGHPGAQVRDNALSKARFEFRWEDQFNIGLDPDKAREFHDETLPKDSAKVAHFCSMCGPHFCSMKITQDVREFAAQQGVSETEALKKGMEVKAVEFVKTGAEIYHRQ</sequence>
<feature type="chain" id="PRO_1000093193" description="Phosphomethylpyrimidine synthase">
    <location>
        <begin position="1"/>
        <end position="643"/>
    </location>
</feature>
<feature type="binding site" evidence="1">
    <location>
        <position position="248"/>
    </location>
    <ligand>
        <name>substrate</name>
    </ligand>
</feature>
<feature type="binding site" evidence="1">
    <location>
        <position position="277"/>
    </location>
    <ligand>
        <name>substrate</name>
    </ligand>
</feature>
<feature type="binding site" evidence="1">
    <location>
        <position position="306"/>
    </location>
    <ligand>
        <name>substrate</name>
    </ligand>
</feature>
<feature type="binding site" evidence="1">
    <location>
        <position position="342"/>
    </location>
    <ligand>
        <name>substrate</name>
    </ligand>
</feature>
<feature type="binding site" evidence="1">
    <location>
        <begin position="362"/>
        <end position="364"/>
    </location>
    <ligand>
        <name>substrate</name>
    </ligand>
</feature>
<feature type="binding site" evidence="1">
    <location>
        <begin position="403"/>
        <end position="406"/>
    </location>
    <ligand>
        <name>substrate</name>
    </ligand>
</feature>
<feature type="binding site" evidence="1">
    <location>
        <position position="442"/>
    </location>
    <ligand>
        <name>substrate</name>
    </ligand>
</feature>
<feature type="binding site" evidence="1">
    <location>
        <position position="446"/>
    </location>
    <ligand>
        <name>Zn(2+)</name>
        <dbReference type="ChEBI" id="CHEBI:29105"/>
    </ligand>
</feature>
<feature type="binding site" evidence="1">
    <location>
        <position position="469"/>
    </location>
    <ligand>
        <name>substrate</name>
    </ligand>
</feature>
<feature type="binding site" evidence="1">
    <location>
        <position position="510"/>
    </location>
    <ligand>
        <name>Zn(2+)</name>
        <dbReference type="ChEBI" id="CHEBI:29105"/>
    </ligand>
</feature>
<feature type="binding site" evidence="1">
    <location>
        <position position="590"/>
    </location>
    <ligand>
        <name>[4Fe-4S] cluster</name>
        <dbReference type="ChEBI" id="CHEBI:49883"/>
        <note>4Fe-4S-S-AdoMet</note>
    </ligand>
</feature>
<feature type="binding site" evidence="1">
    <location>
        <position position="593"/>
    </location>
    <ligand>
        <name>[4Fe-4S] cluster</name>
        <dbReference type="ChEBI" id="CHEBI:49883"/>
        <note>4Fe-4S-S-AdoMet</note>
    </ligand>
</feature>
<feature type="binding site" evidence="1">
    <location>
        <position position="598"/>
    </location>
    <ligand>
        <name>[4Fe-4S] cluster</name>
        <dbReference type="ChEBI" id="CHEBI:49883"/>
        <note>4Fe-4S-S-AdoMet</note>
    </ligand>
</feature>
<accession>B4ED40</accession>
<dbReference type="EC" id="4.1.99.17" evidence="1"/>
<dbReference type="EMBL" id="AM747720">
    <property type="protein sequence ID" value="CAR51407.1"/>
    <property type="molecule type" value="Genomic_DNA"/>
</dbReference>
<dbReference type="RefSeq" id="WP_006483722.1">
    <property type="nucleotide sequence ID" value="NC_011000.1"/>
</dbReference>
<dbReference type="SMR" id="B4ED40"/>
<dbReference type="GeneID" id="56557674"/>
<dbReference type="KEGG" id="bcj:BCAL1104"/>
<dbReference type="eggNOG" id="COG0422">
    <property type="taxonomic scope" value="Bacteria"/>
</dbReference>
<dbReference type="HOGENOM" id="CLU_013181_2_1_4"/>
<dbReference type="BioCyc" id="BCEN216591:G1G1V-1219-MONOMER"/>
<dbReference type="UniPathway" id="UPA00060"/>
<dbReference type="Proteomes" id="UP000001035">
    <property type="component" value="Chromosome 1"/>
</dbReference>
<dbReference type="GO" id="GO:0005829">
    <property type="term" value="C:cytosol"/>
    <property type="evidence" value="ECO:0007669"/>
    <property type="project" value="TreeGrafter"/>
</dbReference>
<dbReference type="GO" id="GO:0051539">
    <property type="term" value="F:4 iron, 4 sulfur cluster binding"/>
    <property type="evidence" value="ECO:0007669"/>
    <property type="project" value="UniProtKB-KW"/>
</dbReference>
<dbReference type="GO" id="GO:0016830">
    <property type="term" value="F:carbon-carbon lyase activity"/>
    <property type="evidence" value="ECO:0007669"/>
    <property type="project" value="InterPro"/>
</dbReference>
<dbReference type="GO" id="GO:0008270">
    <property type="term" value="F:zinc ion binding"/>
    <property type="evidence" value="ECO:0007669"/>
    <property type="project" value="UniProtKB-UniRule"/>
</dbReference>
<dbReference type="GO" id="GO:0009228">
    <property type="term" value="P:thiamine biosynthetic process"/>
    <property type="evidence" value="ECO:0007669"/>
    <property type="project" value="UniProtKB-KW"/>
</dbReference>
<dbReference type="GO" id="GO:0009229">
    <property type="term" value="P:thiamine diphosphate biosynthetic process"/>
    <property type="evidence" value="ECO:0007669"/>
    <property type="project" value="UniProtKB-UniRule"/>
</dbReference>
<dbReference type="FunFam" id="3.20.20.540:FF:000001">
    <property type="entry name" value="Phosphomethylpyrimidine synthase"/>
    <property type="match status" value="1"/>
</dbReference>
<dbReference type="Gene3D" id="6.10.250.620">
    <property type="match status" value="1"/>
</dbReference>
<dbReference type="Gene3D" id="3.20.20.540">
    <property type="entry name" value="Radical SAM ThiC family, central domain"/>
    <property type="match status" value="1"/>
</dbReference>
<dbReference type="HAMAP" id="MF_00089">
    <property type="entry name" value="ThiC"/>
    <property type="match status" value="1"/>
</dbReference>
<dbReference type="InterPro" id="IPR037509">
    <property type="entry name" value="ThiC"/>
</dbReference>
<dbReference type="InterPro" id="IPR025747">
    <property type="entry name" value="ThiC-associated_dom"/>
</dbReference>
<dbReference type="InterPro" id="IPR038521">
    <property type="entry name" value="ThiC/Bza_core_dom"/>
</dbReference>
<dbReference type="InterPro" id="IPR002817">
    <property type="entry name" value="ThiC/BzaA/B"/>
</dbReference>
<dbReference type="NCBIfam" id="NF006763">
    <property type="entry name" value="PRK09284.1"/>
    <property type="match status" value="1"/>
</dbReference>
<dbReference type="NCBIfam" id="NF009895">
    <property type="entry name" value="PRK13352.1"/>
    <property type="match status" value="1"/>
</dbReference>
<dbReference type="NCBIfam" id="TIGR00190">
    <property type="entry name" value="thiC"/>
    <property type="match status" value="1"/>
</dbReference>
<dbReference type="PANTHER" id="PTHR30557:SF1">
    <property type="entry name" value="PHOSPHOMETHYLPYRIMIDINE SYNTHASE, CHLOROPLASTIC"/>
    <property type="match status" value="1"/>
</dbReference>
<dbReference type="PANTHER" id="PTHR30557">
    <property type="entry name" value="THIAMINE BIOSYNTHESIS PROTEIN THIC"/>
    <property type="match status" value="1"/>
</dbReference>
<dbReference type="Pfam" id="PF13667">
    <property type="entry name" value="ThiC-associated"/>
    <property type="match status" value="1"/>
</dbReference>
<dbReference type="Pfam" id="PF01964">
    <property type="entry name" value="ThiC_Rad_SAM"/>
    <property type="match status" value="1"/>
</dbReference>
<dbReference type="SFLD" id="SFLDF00407">
    <property type="entry name" value="phosphomethylpyrimidine_syntha"/>
    <property type="match status" value="1"/>
</dbReference>
<dbReference type="SFLD" id="SFLDG01114">
    <property type="entry name" value="phosphomethylpyrimidine_syntha"/>
    <property type="match status" value="1"/>
</dbReference>
<dbReference type="SFLD" id="SFLDS00113">
    <property type="entry name" value="Radical_SAM_Phosphomethylpyrim"/>
    <property type="match status" value="1"/>
</dbReference>
<organism>
    <name type="scientific">Burkholderia cenocepacia (strain ATCC BAA-245 / DSM 16553 / LMG 16656 / NCTC 13227 / J2315 / CF5610)</name>
    <name type="common">Burkholderia cepacia (strain J2315)</name>
    <dbReference type="NCBI Taxonomy" id="216591"/>
    <lineage>
        <taxon>Bacteria</taxon>
        <taxon>Pseudomonadati</taxon>
        <taxon>Pseudomonadota</taxon>
        <taxon>Betaproteobacteria</taxon>
        <taxon>Burkholderiales</taxon>
        <taxon>Burkholderiaceae</taxon>
        <taxon>Burkholderia</taxon>
        <taxon>Burkholderia cepacia complex</taxon>
    </lineage>
</organism>
<protein>
    <recommendedName>
        <fullName evidence="1">Phosphomethylpyrimidine synthase</fullName>
        <ecNumber evidence="1">4.1.99.17</ecNumber>
    </recommendedName>
    <alternativeName>
        <fullName evidence="1">Hydroxymethylpyrimidine phosphate synthase</fullName>
        <shortName evidence="1">HMP-P synthase</shortName>
        <shortName evidence="1">HMP-phosphate synthase</shortName>
        <shortName evidence="1">HMPP synthase</shortName>
    </alternativeName>
    <alternativeName>
        <fullName evidence="1">Thiamine biosynthesis protein ThiC</fullName>
    </alternativeName>
</protein>
<gene>
    <name evidence="1" type="primary">thiC</name>
    <name type="ordered locus">BceJ2315_10870</name>
    <name type="ORF">BCAL1104</name>
</gene>
<keyword id="KW-0004">4Fe-4S</keyword>
<keyword id="KW-0408">Iron</keyword>
<keyword id="KW-0411">Iron-sulfur</keyword>
<keyword id="KW-0456">Lyase</keyword>
<keyword id="KW-0479">Metal-binding</keyword>
<keyword id="KW-0949">S-adenosyl-L-methionine</keyword>
<keyword id="KW-0784">Thiamine biosynthesis</keyword>
<keyword id="KW-0862">Zinc</keyword>
<name>THIC_BURCJ</name>
<evidence type="ECO:0000255" key="1">
    <source>
        <dbReference type="HAMAP-Rule" id="MF_00089"/>
    </source>
</evidence>
<proteinExistence type="inferred from homology"/>